<comment type="catalytic activity">
    <reaction evidence="1">
        <text>tRNA(His) + L-histidine + ATP = L-histidyl-tRNA(His) + AMP + diphosphate + H(+)</text>
        <dbReference type="Rhea" id="RHEA:17313"/>
        <dbReference type="Rhea" id="RHEA-COMP:9665"/>
        <dbReference type="Rhea" id="RHEA-COMP:9689"/>
        <dbReference type="ChEBI" id="CHEBI:15378"/>
        <dbReference type="ChEBI" id="CHEBI:30616"/>
        <dbReference type="ChEBI" id="CHEBI:33019"/>
        <dbReference type="ChEBI" id="CHEBI:57595"/>
        <dbReference type="ChEBI" id="CHEBI:78442"/>
        <dbReference type="ChEBI" id="CHEBI:78527"/>
        <dbReference type="ChEBI" id="CHEBI:456215"/>
        <dbReference type="EC" id="6.1.1.21"/>
    </reaction>
</comment>
<comment type="subunit">
    <text evidence="1">Homodimer.</text>
</comment>
<comment type="subcellular location">
    <subcellularLocation>
        <location evidence="1">Cytoplasm</location>
    </subcellularLocation>
</comment>
<comment type="similarity">
    <text evidence="1">Belongs to the class-II aminoacyl-tRNA synthetase family.</text>
</comment>
<evidence type="ECO:0000255" key="1">
    <source>
        <dbReference type="HAMAP-Rule" id="MF_00127"/>
    </source>
</evidence>
<feature type="chain" id="PRO_1000016377" description="Histidine--tRNA ligase">
    <location>
        <begin position="1"/>
        <end position="428"/>
    </location>
</feature>
<gene>
    <name evidence="1" type="primary">hisS</name>
    <name type="ordered locus">Ldb0888</name>
</gene>
<protein>
    <recommendedName>
        <fullName evidence="1">Histidine--tRNA ligase</fullName>
        <ecNumber evidence="1">6.1.1.21</ecNumber>
    </recommendedName>
    <alternativeName>
        <fullName evidence="1">Histidyl-tRNA synthetase</fullName>
        <shortName evidence="1">HisRS</shortName>
    </alternativeName>
</protein>
<sequence length="428" mass="48731">MRVQRPKGTVDILPETSGQWEKVEQTARDLFKRANYHEIRTPSFENYELFSRSSGETSDVVEKEMYDFEDKGGRHIALRPEGTAGVVRAYVENKIYGPDYVKPFNVYYIAAMYRYERPQAGRQREFHQIGVESFGSNGYLADVETILLGHDLLAELGVKNYELHINTLGDSEVRQAYHDALVDYFTPVKDQLSEDSQRRLGKNPLRILDSKAEEDQQFLSEAPKIRDYLDEESKENFNKILASLDKLGVKYVIDDDLVRGLDYYTGVIFEFMVDDPTLWASPSTVLGGGRYNHLVEEFSGPETPAVGFGIGEERLMLVLSKQNPEMFEDQGIDFFITNIGEGTDIKAVEVARQLRSLGFSAQYDVDQKKLKAQFRKADRVGARYVVTLGAKELAEGKLTVKRLSDGQQFSLEFTDLEDKTNLLSKIEK</sequence>
<organism>
    <name type="scientific">Lactobacillus delbrueckii subsp. bulgaricus (strain ATCC 11842 / DSM 20081 / BCRC 10696 / JCM 1002 / NBRC 13953 / NCIMB 11778 / NCTC 12712 / WDCM 00102 / Lb 14)</name>
    <dbReference type="NCBI Taxonomy" id="390333"/>
    <lineage>
        <taxon>Bacteria</taxon>
        <taxon>Bacillati</taxon>
        <taxon>Bacillota</taxon>
        <taxon>Bacilli</taxon>
        <taxon>Lactobacillales</taxon>
        <taxon>Lactobacillaceae</taxon>
        <taxon>Lactobacillus</taxon>
    </lineage>
</organism>
<accession>Q1GAG8</accession>
<name>SYH_LACDA</name>
<keyword id="KW-0030">Aminoacyl-tRNA synthetase</keyword>
<keyword id="KW-0067">ATP-binding</keyword>
<keyword id="KW-0963">Cytoplasm</keyword>
<keyword id="KW-0436">Ligase</keyword>
<keyword id="KW-0547">Nucleotide-binding</keyword>
<keyword id="KW-0648">Protein biosynthesis</keyword>
<keyword id="KW-1185">Reference proteome</keyword>
<proteinExistence type="inferred from homology"/>
<dbReference type="EC" id="6.1.1.21" evidence="1"/>
<dbReference type="EMBL" id="CR954253">
    <property type="protein sequence ID" value="CAI97709.1"/>
    <property type="molecule type" value="Genomic_DNA"/>
</dbReference>
<dbReference type="RefSeq" id="WP_003624319.1">
    <property type="nucleotide sequence ID" value="NZ_JQAV01000008.1"/>
</dbReference>
<dbReference type="SMR" id="Q1GAG8"/>
<dbReference type="STRING" id="390333.Ldb0888"/>
<dbReference type="KEGG" id="ldb:Ldb0888"/>
<dbReference type="PATRIC" id="fig|390333.13.peg.1856"/>
<dbReference type="eggNOG" id="COG0124">
    <property type="taxonomic scope" value="Bacteria"/>
</dbReference>
<dbReference type="HOGENOM" id="CLU_025113_1_1_9"/>
<dbReference type="BioCyc" id="LDEL390333:LDB_RS03900-MONOMER"/>
<dbReference type="Proteomes" id="UP000001259">
    <property type="component" value="Chromosome"/>
</dbReference>
<dbReference type="GO" id="GO:0005737">
    <property type="term" value="C:cytoplasm"/>
    <property type="evidence" value="ECO:0007669"/>
    <property type="project" value="UniProtKB-SubCell"/>
</dbReference>
<dbReference type="GO" id="GO:0005524">
    <property type="term" value="F:ATP binding"/>
    <property type="evidence" value="ECO:0007669"/>
    <property type="project" value="UniProtKB-UniRule"/>
</dbReference>
<dbReference type="GO" id="GO:0140096">
    <property type="term" value="F:catalytic activity, acting on a protein"/>
    <property type="evidence" value="ECO:0007669"/>
    <property type="project" value="UniProtKB-ARBA"/>
</dbReference>
<dbReference type="GO" id="GO:0004821">
    <property type="term" value="F:histidine-tRNA ligase activity"/>
    <property type="evidence" value="ECO:0007669"/>
    <property type="project" value="UniProtKB-UniRule"/>
</dbReference>
<dbReference type="GO" id="GO:0016740">
    <property type="term" value="F:transferase activity"/>
    <property type="evidence" value="ECO:0007669"/>
    <property type="project" value="UniProtKB-ARBA"/>
</dbReference>
<dbReference type="GO" id="GO:0006427">
    <property type="term" value="P:histidyl-tRNA aminoacylation"/>
    <property type="evidence" value="ECO:0007669"/>
    <property type="project" value="UniProtKB-UniRule"/>
</dbReference>
<dbReference type="CDD" id="cd00773">
    <property type="entry name" value="HisRS-like_core"/>
    <property type="match status" value="1"/>
</dbReference>
<dbReference type="CDD" id="cd00859">
    <property type="entry name" value="HisRS_anticodon"/>
    <property type="match status" value="1"/>
</dbReference>
<dbReference type="Gene3D" id="3.40.50.800">
    <property type="entry name" value="Anticodon-binding domain"/>
    <property type="match status" value="1"/>
</dbReference>
<dbReference type="Gene3D" id="3.30.930.10">
    <property type="entry name" value="Bira Bifunctional Protein, Domain 2"/>
    <property type="match status" value="1"/>
</dbReference>
<dbReference type="HAMAP" id="MF_00127">
    <property type="entry name" value="His_tRNA_synth"/>
    <property type="match status" value="1"/>
</dbReference>
<dbReference type="InterPro" id="IPR006195">
    <property type="entry name" value="aa-tRNA-synth_II"/>
</dbReference>
<dbReference type="InterPro" id="IPR045864">
    <property type="entry name" value="aa-tRNA-synth_II/BPL/LPL"/>
</dbReference>
<dbReference type="InterPro" id="IPR004154">
    <property type="entry name" value="Anticodon-bd"/>
</dbReference>
<dbReference type="InterPro" id="IPR036621">
    <property type="entry name" value="Anticodon-bd_dom_sf"/>
</dbReference>
<dbReference type="InterPro" id="IPR015807">
    <property type="entry name" value="His-tRNA-ligase"/>
</dbReference>
<dbReference type="InterPro" id="IPR041715">
    <property type="entry name" value="HisRS-like_core"/>
</dbReference>
<dbReference type="InterPro" id="IPR004516">
    <property type="entry name" value="HisRS/HisZ"/>
</dbReference>
<dbReference type="InterPro" id="IPR033656">
    <property type="entry name" value="HisRS_anticodon"/>
</dbReference>
<dbReference type="NCBIfam" id="TIGR00442">
    <property type="entry name" value="hisS"/>
    <property type="match status" value="1"/>
</dbReference>
<dbReference type="PANTHER" id="PTHR43707:SF1">
    <property type="entry name" value="HISTIDINE--TRNA LIGASE, MITOCHONDRIAL-RELATED"/>
    <property type="match status" value="1"/>
</dbReference>
<dbReference type="PANTHER" id="PTHR43707">
    <property type="entry name" value="HISTIDYL-TRNA SYNTHETASE"/>
    <property type="match status" value="1"/>
</dbReference>
<dbReference type="Pfam" id="PF03129">
    <property type="entry name" value="HGTP_anticodon"/>
    <property type="match status" value="1"/>
</dbReference>
<dbReference type="Pfam" id="PF13393">
    <property type="entry name" value="tRNA-synt_His"/>
    <property type="match status" value="1"/>
</dbReference>
<dbReference type="PIRSF" id="PIRSF001549">
    <property type="entry name" value="His-tRNA_synth"/>
    <property type="match status" value="1"/>
</dbReference>
<dbReference type="SUPFAM" id="SSF52954">
    <property type="entry name" value="Class II aaRS ABD-related"/>
    <property type="match status" value="1"/>
</dbReference>
<dbReference type="SUPFAM" id="SSF55681">
    <property type="entry name" value="Class II aaRS and biotin synthetases"/>
    <property type="match status" value="1"/>
</dbReference>
<dbReference type="PROSITE" id="PS50862">
    <property type="entry name" value="AA_TRNA_LIGASE_II"/>
    <property type="match status" value="1"/>
</dbReference>
<reference key="1">
    <citation type="journal article" date="2006" name="Proc. Natl. Acad. Sci. U.S.A.">
        <title>The complete genome sequence of Lactobacillus bulgaricus reveals extensive and ongoing reductive evolution.</title>
        <authorList>
            <person name="van de Guchte M."/>
            <person name="Penaud S."/>
            <person name="Grimaldi C."/>
            <person name="Barbe V."/>
            <person name="Bryson K."/>
            <person name="Nicolas P."/>
            <person name="Robert C."/>
            <person name="Oztas S."/>
            <person name="Mangenot S."/>
            <person name="Couloux A."/>
            <person name="Loux V."/>
            <person name="Dervyn R."/>
            <person name="Bossy R."/>
            <person name="Bolotin A."/>
            <person name="Batto J.-M."/>
            <person name="Walunas T."/>
            <person name="Gibrat J.-F."/>
            <person name="Bessieres P."/>
            <person name="Weissenbach J."/>
            <person name="Ehrlich S.D."/>
            <person name="Maguin E."/>
        </authorList>
    </citation>
    <scope>NUCLEOTIDE SEQUENCE [LARGE SCALE GENOMIC DNA]</scope>
    <source>
        <strain>ATCC 11842 / DSM 20081 / BCRC 10696 / JCM 1002 / NBRC 13953 / NCIMB 11778 / NCTC 12712 / WDCM 00102 / Lb 14</strain>
    </source>
</reference>